<feature type="chain" id="PRO_1000049616" description="Multidrug resistance protein MdtK">
    <location>
        <begin position="1"/>
        <end position="457"/>
    </location>
</feature>
<feature type="transmembrane region" description="Helical" evidence="1">
    <location>
        <begin position="11"/>
        <end position="31"/>
    </location>
</feature>
<feature type="transmembrane region" description="Helical" evidence="1">
    <location>
        <begin position="46"/>
        <end position="66"/>
    </location>
</feature>
<feature type="transmembrane region" description="Helical" evidence="1">
    <location>
        <begin position="93"/>
        <end position="113"/>
    </location>
</feature>
<feature type="transmembrane region" description="Helical" evidence="1">
    <location>
        <begin position="127"/>
        <end position="147"/>
    </location>
</feature>
<feature type="transmembrane region" description="Helical" evidence="1">
    <location>
        <begin position="160"/>
        <end position="180"/>
    </location>
</feature>
<feature type="transmembrane region" description="Helical" evidence="1">
    <location>
        <begin position="188"/>
        <end position="208"/>
    </location>
</feature>
<feature type="transmembrane region" description="Helical" evidence="1">
    <location>
        <begin position="243"/>
        <end position="263"/>
    </location>
</feature>
<feature type="transmembrane region" description="Helical" evidence="1">
    <location>
        <begin position="283"/>
        <end position="301"/>
    </location>
</feature>
<feature type="transmembrane region" description="Helical" evidence="1">
    <location>
        <begin position="316"/>
        <end position="336"/>
    </location>
</feature>
<feature type="transmembrane region" description="Helical" evidence="1">
    <location>
        <begin position="357"/>
        <end position="377"/>
    </location>
</feature>
<feature type="transmembrane region" description="Helical" evidence="1">
    <location>
        <begin position="387"/>
        <end position="407"/>
    </location>
</feature>
<feature type="transmembrane region" description="Helical" evidence="1">
    <location>
        <begin position="418"/>
        <end position="438"/>
    </location>
</feature>
<dbReference type="EMBL" id="CP000668">
    <property type="protein sequence ID" value="ABP39161.1"/>
    <property type="molecule type" value="Genomic_DNA"/>
</dbReference>
<dbReference type="RefSeq" id="WP_002210937.1">
    <property type="nucleotide sequence ID" value="NZ_CP009715.1"/>
</dbReference>
<dbReference type="SMR" id="A4TIP9"/>
<dbReference type="KEGG" id="ypp:YPDSF_0755"/>
<dbReference type="PATRIC" id="fig|386656.14.peg.3111"/>
<dbReference type="GO" id="GO:0005886">
    <property type="term" value="C:plasma membrane"/>
    <property type="evidence" value="ECO:0007669"/>
    <property type="project" value="UniProtKB-SubCell"/>
</dbReference>
<dbReference type="GO" id="GO:0015297">
    <property type="term" value="F:antiporter activity"/>
    <property type="evidence" value="ECO:0007669"/>
    <property type="project" value="UniProtKB-UniRule"/>
</dbReference>
<dbReference type="GO" id="GO:0042910">
    <property type="term" value="F:xenobiotic transmembrane transporter activity"/>
    <property type="evidence" value="ECO:0007669"/>
    <property type="project" value="UniProtKB-UniRule"/>
</dbReference>
<dbReference type="GO" id="GO:0006814">
    <property type="term" value="P:sodium ion transport"/>
    <property type="evidence" value="ECO:0007669"/>
    <property type="project" value="UniProtKB-UniRule"/>
</dbReference>
<dbReference type="GO" id="GO:0006855">
    <property type="term" value="P:xenobiotic transmembrane transport"/>
    <property type="evidence" value="ECO:0007669"/>
    <property type="project" value="UniProtKB-UniRule"/>
</dbReference>
<dbReference type="CDD" id="cd13131">
    <property type="entry name" value="MATE_NorM_like"/>
    <property type="match status" value="1"/>
</dbReference>
<dbReference type="HAMAP" id="MF_00400">
    <property type="entry name" value="MdtK"/>
    <property type="match status" value="1"/>
</dbReference>
<dbReference type="InterPro" id="IPR002528">
    <property type="entry name" value="MATE_fam"/>
</dbReference>
<dbReference type="InterPro" id="IPR050222">
    <property type="entry name" value="MATE_MdtK"/>
</dbReference>
<dbReference type="InterPro" id="IPR048279">
    <property type="entry name" value="MdtK-like"/>
</dbReference>
<dbReference type="InterPro" id="IPR022913">
    <property type="entry name" value="Multidrug-R_MdtK"/>
</dbReference>
<dbReference type="NCBIfam" id="TIGR00797">
    <property type="entry name" value="matE"/>
    <property type="match status" value="1"/>
</dbReference>
<dbReference type="PANTHER" id="PTHR43298:SF2">
    <property type="entry name" value="FMN_FAD EXPORTER YEEO-RELATED"/>
    <property type="match status" value="1"/>
</dbReference>
<dbReference type="PANTHER" id="PTHR43298">
    <property type="entry name" value="MULTIDRUG RESISTANCE PROTEIN NORM-RELATED"/>
    <property type="match status" value="1"/>
</dbReference>
<dbReference type="Pfam" id="PF01554">
    <property type="entry name" value="MatE"/>
    <property type="match status" value="2"/>
</dbReference>
<dbReference type="PIRSF" id="PIRSF006603">
    <property type="entry name" value="DinF"/>
    <property type="match status" value="1"/>
</dbReference>
<evidence type="ECO:0000255" key="1">
    <source>
        <dbReference type="HAMAP-Rule" id="MF_00400"/>
    </source>
</evidence>
<keyword id="KW-0050">Antiport</keyword>
<keyword id="KW-0997">Cell inner membrane</keyword>
<keyword id="KW-1003">Cell membrane</keyword>
<keyword id="KW-0406">Ion transport</keyword>
<keyword id="KW-0472">Membrane</keyword>
<keyword id="KW-0915">Sodium</keyword>
<keyword id="KW-0739">Sodium transport</keyword>
<keyword id="KW-0812">Transmembrane</keyword>
<keyword id="KW-1133">Transmembrane helix</keyword>
<keyword id="KW-0813">Transport</keyword>
<reference key="1">
    <citation type="submission" date="2007-02" db="EMBL/GenBank/DDBJ databases">
        <title>Complete sequence of chromosome of Yersinia pestis Pestoides F.</title>
        <authorList>
            <consortium name="US DOE Joint Genome Institute"/>
            <person name="Copeland A."/>
            <person name="Lucas S."/>
            <person name="Lapidus A."/>
            <person name="Barry K."/>
            <person name="Detter J.C."/>
            <person name="Glavina del Rio T."/>
            <person name="Hammon N."/>
            <person name="Israni S."/>
            <person name="Dalin E."/>
            <person name="Tice H."/>
            <person name="Pitluck S."/>
            <person name="Di Bartolo G."/>
            <person name="Chain P."/>
            <person name="Malfatti S."/>
            <person name="Shin M."/>
            <person name="Vergez L."/>
            <person name="Schmutz J."/>
            <person name="Larimer F."/>
            <person name="Land M."/>
            <person name="Hauser L."/>
            <person name="Worsham P."/>
            <person name="Chu M."/>
            <person name="Bearden S."/>
            <person name="Garcia E."/>
            <person name="Richardson P."/>
        </authorList>
    </citation>
    <scope>NUCLEOTIDE SEQUENCE [LARGE SCALE GENOMIC DNA]</scope>
    <source>
        <strain>Pestoides F</strain>
    </source>
</reference>
<sequence>MQKYIVEARSLLALAIPVVIAQLSQTAMGVVDTIMAGSVSATDMAAVAVGTSIWLPAILFGHGLLLALTPTVAQLNGSGRRSQIAHQVRQGFWLALCVSVLIMLVLYNSDHVIKQMDNIDPVLAQKAVGFLHAIMWGVPGYLFFQVLRNQCEGLSKTKPGMVIGFVGLLVNIPINYIFIYGKFGAPALGGVGCGVATASVYWVMFLMMRWYVTRARSQQDIKLEKGFAAPDWQVMKRLSGLGLPVALALFFEVTLFAVVALLVSPLGIVAVAGHQIALNFSSLMFMLPMSLSVAATIRVGFRLGQGAVEQAQVAAYTSMAVGLLLASVTAVFTIVFREHIALLYNKTPEVVTMASHLMLLAALYQLSDAVQVIGSGVLRGYKDTRSIFFITFTAYWLLGLPSGYLLGLTDYILPAMGPAGFWIGFIIGLTAAAILMVLRIRWLQKQPTAFILQRAAH</sequence>
<name>MDTK_YERPP</name>
<accession>A4TIP9</accession>
<comment type="function">
    <text evidence="1">Multidrug efflux pump that functions probably as a Na(+)/drug antiporter.</text>
</comment>
<comment type="subcellular location">
    <subcellularLocation>
        <location evidence="1">Cell inner membrane</location>
        <topology evidence="1">Multi-pass membrane protein</topology>
    </subcellularLocation>
</comment>
<comment type="similarity">
    <text evidence="1">Belongs to the multi antimicrobial extrusion (MATE) (TC 2.A.66.1) family. MdtK subfamily.</text>
</comment>
<organism>
    <name type="scientific">Yersinia pestis (strain Pestoides F)</name>
    <dbReference type="NCBI Taxonomy" id="386656"/>
    <lineage>
        <taxon>Bacteria</taxon>
        <taxon>Pseudomonadati</taxon>
        <taxon>Pseudomonadota</taxon>
        <taxon>Gammaproteobacteria</taxon>
        <taxon>Enterobacterales</taxon>
        <taxon>Yersiniaceae</taxon>
        <taxon>Yersinia</taxon>
    </lineage>
</organism>
<protein>
    <recommendedName>
        <fullName evidence="1">Multidrug resistance protein MdtK</fullName>
    </recommendedName>
    <alternativeName>
        <fullName evidence="1">Multidrug-efflux transporter</fullName>
    </alternativeName>
</protein>
<gene>
    <name evidence="1" type="primary">mdtK</name>
    <name type="ordered locus">YPDSF_0755</name>
</gene>
<proteinExistence type="inferred from homology"/>